<protein>
    <recommendedName>
        <fullName evidence="1">Ribosomal protein uS12 methylthiotransferase RimO</fullName>
        <shortName evidence="1">uS12 MTTase</shortName>
        <shortName evidence="1">uS12 methylthiotransferase</shortName>
        <ecNumber evidence="1">2.8.4.4</ecNumber>
    </recommendedName>
    <alternativeName>
        <fullName evidence="1">Ribosomal protein uS12 (aspartate-C(3))-methylthiotransferase</fullName>
    </alternativeName>
    <alternativeName>
        <fullName evidence="1">Ribosome maturation factor RimO</fullName>
    </alternativeName>
</protein>
<dbReference type="EC" id="2.8.4.4" evidence="1"/>
<dbReference type="EMBL" id="BX572601">
    <property type="protein sequence ID" value="CAE28116.1"/>
    <property type="molecule type" value="Genomic_DNA"/>
</dbReference>
<dbReference type="RefSeq" id="WP_011158225.1">
    <property type="nucleotide sequence ID" value="NZ_CP116810.1"/>
</dbReference>
<dbReference type="SMR" id="Q6N6E2"/>
<dbReference type="STRING" id="258594.RPA2675"/>
<dbReference type="GeneID" id="66893750"/>
<dbReference type="eggNOG" id="COG0621">
    <property type="taxonomic scope" value="Bacteria"/>
</dbReference>
<dbReference type="HOGENOM" id="CLU_018697_0_0_5"/>
<dbReference type="PhylomeDB" id="Q6N6E2"/>
<dbReference type="GO" id="GO:0005829">
    <property type="term" value="C:cytosol"/>
    <property type="evidence" value="ECO:0007669"/>
    <property type="project" value="TreeGrafter"/>
</dbReference>
<dbReference type="GO" id="GO:0051539">
    <property type="term" value="F:4 iron, 4 sulfur cluster binding"/>
    <property type="evidence" value="ECO:0007669"/>
    <property type="project" value="UniProtKB-UniRule"/>
</dbReference>
<dbReference type="GO" id="GO:0035599">
    <property type="term" value="F:aspartic acid methylthiotransferase activity"/>
    <property type="evidence" value="ECO:0007669"/>
    <property type="project" value="TreeGrafter"/>
</dbReference>
<dbReference type="GO" id="GO:0046872">
    <property type="term" value="F:metal ion binding"/>
    <property type="evidence" value="ECO:0007669"/>
    <property type="project" value="UniProtKB-KW"/>
</dbReference>
<dbReference type="GO" id="GO:0103039">
    <property type="term" value="F:protein methylthiotransferase activity"/>
    <property type="evidence" value="ECO:0007669"/>
    <property type="project" value="UniProtKB-EC"/>
</dbReference>
<dbReference type="GO" id="GO:0006400">
    <property type="term" value="P:tRNA modification"/>
    <property type="evidence" value="ECO:0007669"/>
    <property type="project" value="InterPro"/>
</dbReference>
<dbReference type="CDD" id="cd01335">
    <property type="entry name" value="Radical_SAM"/>
    <property type="match status" value="1"/>
</dbReference>
<dbReference type="FunFam" id="2.40.50.140:FF:000060">
    <property type="entry name" value="Ribosomal protein S12 methylthiotransferase RimO"/>
    <property type="match status" value="1"/>
</dbReference>
<dbReference type="FunFam" id="3.40.50.12160:FF:000002">
    <property type="entry name" value="Ribosomal protein S12 methylthiotransferase RimO"/>
    <property type="match status" value="1"/>
</dbReference>
<dbReference type="FunFam" id="3.80.30.20:FF:000001">
    <property type="entry name" value="tRNA-2-methylthio-N(6)-dimethylallyladenosine synthase 2"/>
    <property type="match status" value="1"/>
</dbReference>
<dbReference type="Gene3D" id="3.40.50.12160">
    <property type="entry name" value="Methylthiotransferase, N-terminal domain"/>
    <property type="match status" value="1"/>
</dbReference>
<dbReference type="Gene3D" id="2.40.50.140">
    <property type="entry name" value="Nucleic acid-binding proteins"/>
    <property type="match status" value="1"/>
</dbReference>
<dbReference type="Gene3D" id="3.80.30.20">
    <property type="entry name" value="tm_1862 like domain"/>
    <property type="match status" value="1"/>
</dbReference>
<dbReference type="HAMAP" id="MF_01865">
    <property type="entry name" value="MTTase_RimO"/>
    <property type="match status" value="1"/>
</dbReference>
<dbReference type="InterPro" id="IPR006638">
    <property type="entry name" value="Elp3/MiaA/NifB-like_rSAM"/>
</dbReference>
<dbReference type="InterPro" id="IPR005839">
    <property type="entry name" value="Methylthiotransferase"/>
</dbReference>
<dbReference type="InterPro" id="IPR020612">
    <property type="entry name" value="Methylthiotransferase_CS"/>
</dbReference>
<dbReference type="InterPro" id="IPR013848">
    <property type="entry name" value="Methylthiotransferase_N"/>
</dbReference>
<dbReference type="InterPro" id="IPR038135">
    <property type="entry name" value="Methylthiotransferase_N_sf"/>
</dbReference>
<dbReference type="InterPro" id="IPR012340">
    <property type="entry name" value="NA-bd_OB-fold"/>
</dbReference>
<dbReference type="InterPro" id="IPR005840">
    <property type="entry name" value="Ribosomal_uS12_MeSTrfase_RimO"/>
</dbReference>
<dbReference type="InterPro" id="IPR007197">
    <property type="entry name" value="rSAM"/>
</dbReference>
<dbReference type="InterPro" id="IPR023404">
    <property type="entry name" value="rSAM_horseshoe"/>
</dbReference>
<dbReference type="InterPro" id="IPR002792">
    <property type="entry name" value="TRAM_dom"/>
</dbReference>
<dbReference type="NCBIfam" id="TIGR01125">
    <property type="entry name" value="30S ribosomal protein S12 methylthiotransferase RimO"/>
    <property type="match status" value="1"/>
</dbReference>
<dbReference type="NCBIfam" id="TIGR00089">
    <property type="entry name" value="MiaB/RimO family radical SAM methylthiotransferase"/>
    <property type="match status" value="1"/>
</dbReference>
<dbReference type="PANTHER" id="PTHR43837">
    <property type="entry name" value="RIBOSOMAL PROTEIN S12 METHYLTHIOTRANSFERASE RIMO"/>
    <property type="match status" value="1"/>
</dbReference>
<dbReference type="PANTHER" id="PTHR43837:SF1">
    <property type="entry name" value="RIBOSOMAL PROTEIN US12 METHYLTHIOTRANSFERASE RIMO"/>
    <property type="match status" value="1"/>
</dbReference>
<dbReference type="Pfam" id="PF04055">
    <property type="entry name" value="Radical_SAM"/>
    <property type="match status" value="1"/>
</dbReference>
<dbReference type="Pfam" id="PF18693">
    <property type="entry name" value="TRAM_2"/>
    <property type="match status" value="1"/>
</dbReference>
<dbReference type="Pfam" id="PF00919">
    <property type="entry name" value="UPF0004"/>
    <property type="match status" value="1"/>
</dbReference>
<dbReference type="SFLD" id="SFLDG01082">
    <property type="entry name" value="B12-binding_domain_containing"/>
    <property type="match status" value="1"/>
</dbReference>
<dbReference type="SFLD" id="SFLDS00029">
    <property type="entry name" value="Radical_SAM"/>
    <property type="match status" value="1"/>
</dbReference>
<dbReference type="SFLD" id="SFLDF00274">
    <property type="entry name" value="ribosomal_protein_S12_methylth"/>
    <property type="match status" value="1"/>
</dbReference>
<dbReference type="SMART" id="SM00729">
    <property type="entry name" value="Elp3"/>
    <property type="match status" value="1"/>
</dbReference>
<dbReference type="SUPFAM" id="SSF102114">
    <property type="entry name" value="Radical SAM enzymes"/>
    <property type="match status" value="1"/>
</dbReference>
<dbReference type="PROSITE" id="PS51449">
    <property type="entry name" value="MTTASE_N"/>
    <property type="match status" value="1"/>
</dbReference>
<dbReference type="PROSITE" id="PS01278">
    <property type="entry name" value="MTTASE_RADICAL"/>
    <property type="match status" value="1"/>
</dbReference>
<dbReference type="PROSITE" id="PS51918">
    <property type="entry name" value="RADICAL_SAM"/>
    <property type="match status" value="1"/>
</dbReference>
<dbReference type="PROSITE" id="PS50926">
    <property type="entry name" value="TRAM"/>
    <property type="match status" value="1"/>
</dbReference>
<gene>
    <name evidence="1" type="primary">rimO</name>
    <name type="ordered locus">RPA2675</name>
</gene>
<feature type="chain" id="PRO_0000374970" description="Ribosomal protein uS12 methylthiotransferase RimO">
    <location>
        <begin position="1"/>
        <end position="441"/>
    </location>
</feature>
<feature type="domain" description="MTTase N-terminal" evidence="1">
    <location>
        <begin position="7"/>
        <end position="117"/>
    </location>
</feature>
<feature type="domain" description="Radical SAM core" evidence="2">
    <location>
        <begin position="134"/>
        <end position="371"/>
    </location>
</feature>
<feature type="domain" description="TRAM" evidence="1">
    <location>
        <begin position="374"/>
        <end position="440"/>
    </location>
</feature>
<feature type="binding site" evidence="1">
    <location>
        <position position="16"/>
    </location>
    <ligand>
        <name>[4Fe-4S] cluster</name>
        <dbReference type="ChEBI" id="CHEBI:49883"/>
        <label>1</label>
    </ligand>
</feature>
<feature type="binding site" evidence="1">
    <location>
        <position position="52"/>
    </location>
    <ligand>
        <name>[4Fe-4S] cluster</name>
        <dbReference type="ChEBI" id="CHEBI:49883"/>
        <label>1</label>
    </ligand>
</feature>
<feature type="binding site" evidence="1">
    <location>
        <position position="81"/>
    </location>
    <ligand>
        <name>[4Fe-4S] cluster</name>
        <dbReference type="ChEBI" id="CHEBI:49883"/>
        <label>1</label>
    </ligand>
</feature>
<feature type="binding site" evidence="1">
    <location>
        <position position="148"/>
    </location>
    <ligand>
        <name>[4Fe-4S] cluster</name>
        <dbReference type="ChEBI" id="CHEBI:49883"/>
        <label>2</label>
        <note>4Fe-4S-S-AdoMet</note>
    </ligand>
</feature>
<feature type="binding site" evidence="1">
    <location>
        <position position="152"/>
    </location>
    <ligand>
        <name>[4Fe-4S] cluster</name>
        <dbReference type="ChEBI" id="CHEBI:49883"/>
        <label>2</label>
        <note>4Fe-4S-S-AdoMet</note>
    </ligand>
</feature>
<feature type="binding site" evidence="1">
    <location>
        <position position="155"/>
    </location>
    <ligand>
        <name>[4Fe-4S] cluster</name>
        <dbReference type="ChEBI" id="CHEBI:49883"/>
        <label>2</label>
        <note>4Fe-4S-S-AdoMet</note>
    </ligand>
</feature>
<name>RIMO_RHOPA</name>
<reference key="1">
    <citation type="journal article" date="2004" name="Nat. Biotechnol.">
        <title>Complete genome sequence of the metabolically versatile photosynthetic bacterium Rhodopseudomonas palustris.</title>
        <authorList>
            <person name="Larimer F.W."/>
            <person name="Chain P."/>
            <person name="Hauser L."/>
            <person name="Lamerdin J.E."/>
            <person name="Malfatti S."/>
            <person name="Do L."/>
            <person name="Land M.L."/>
            <person name="Pelletier D.A."/>
            <person name="Beatty J.T."/>
            <person name="Lang A.S."/>
            <person name="Tabita F.R."/>
            <person name="Gibson J.L."/>
            <person name="Hanson T.E."/>
            <person name="Bobst C."/>
            <person name="Torres y Torres J.L."/>
            <person name="Peres C."/>
            <person name="Harrison F.H."/>
            <person name="Gibson J."/>
            <person name="Harwood C.S."/>
        </authorList>
    </citation>
    <scope>NUCLEOTIDE SEQUENCE [LARGE SCALE GENOMIC DNA]</scope>
    <source>
        <strain>ATCC BAA-98 / CGA009</strain>
    </source>
</reference>
<accession>Q6N6E2</accession>
<organism>
    <name type="scientific">Rhodopseudomonas palustris (strain ATCC BAA-98 / CGA009)</name>
    <dbReference type="NCBI Taxonomy" id="258594"/>
    <lineage>
        <taxon>Bacteria</taxon>
        <taxon>Pseudomonadati</taxon>
        <taxon>Pseudomonadota</taxon>
        <taxon>Alphaproteobacteria</taxon>
        <taxon>Hyphomicrobiales</taxon>
        <taxon>Nitrobacteraceae</taxon>
        <taxon>Rhodopseudomonas</taxon>
    </lineage>
</organism>
<sequence length="441" mass="48740">MQQATAPKISFVSLGCPKALVDSERIITRLRAEGYELARKHDGADLVIVNTCGFLDSAKQESLAAIGEAMATNGKVIVTGCMGAEPEQIEAAYPGVLSITGPQQYESVLEAVHRARPALHNPHLDLVPPQGVRLTPRHYAYLKISEGCNNRCSFCIIPKLRGDLVSRPAGDVLREAEKLVAAGVKELLVISQDTSAYGVDVKYAESPWKDRAVRAKFLDLASELGELGAWVRLHYVYPYPHVDEVIGLMADGKVLPYLDIPFQHASPDVLKLMKRPAAQDKTLDRIKRWREQCPDLALRSTFIVGFPGETERDFEFLLEWLDEAEIDRLGAFKYEPVAGAPSNALPDQIADEVKQERWNRLMARQQAISARRLKRKVGTRQQVIIDEIGPTVAKGRSKADAPDIDGAVYLSSRRPLRVGEIVTAKIDRADAYDLHGTVAGF</sequence>
<keyword id="KW-0004">4Fe-4S</keyword>
<keyword id="KW-0963">Cytoplasm</keyword>
<keyword id="KW-0408">Iron</keyword>
<keyword id="KW-0411">Iron-sulfur</keyword>
<keyword id="KW-0479">Metal-binding</keyword>
<keyword id="KW-0949">S-adenosyl-L-methionine</keyword>
<keyword id="KW-0808">Transferase</keyword>
<comment type="function">
    <text evidence="1">Catalyzes the methylthiolation of an aspartic acid residue of ribosomal protein uS12.</text>
</comment>
<comment type="catalytic activity">
    <reaction evidence="1">
        <text>L-aspartate(89)-[ribosomal protein uS12]-hydrogen + (sulfur carrier)-SH + AH2 + 2 S-adenosyl-L-methionine = 3-methylsulfanyl-L-aspartate(89)-[ribosomal protein uS12]-hydrogen + (sulfur carrier)-H + 5'-deoxyadenosine + L-methionine + A + S-adenosyl-L-homocysteine + 2 H(+)</text>
        <dbReference type="Rhea" id="RHEA:37087"/>
        <dbReference type="Rhea" id="RHEA-COMP:10460"/>
        <dbReference type="Rhea" id="RHEA-COMP:10461"/>
        <dbReference type="Rhea" id="RHEA-COMP:14737"/>
        <dbReference type="Rhea" id="RHEA-COMP:14739"/>
        <dbReference type="ChEBI" id="CHEBI:13193"/>
        <dbReference type="ChEBI" id="CHEBI:15378"/>
        <dbReference type="ChEBI" id="CHEBI:17319"/>
        <dbReference type="ChEBI" id="CHEBI:17499"/>
        <dbReference type="ChEBI" id="CHEBI:29917"/>
        <dbReference type="ChEBI" id="CHEBI:29961"/>
        <dbReference type="ChEBI" id="CHEBI:57844"/>
        <dbReference type="ChEBI" id="CHEBI:57856"/>
        <dbReference type="ChEBI" id="CHEBI:59789"/>
        <dbReference type="ChEBI" id="CHEBI:64428"/>
        <dbReference type="ChEBI" id="CHEBI:73599"/>
        <dbReference type="EC" id="2.8.4.4"/>
    </reaction>
</comment>
<comment type="cofactor">
    <cofactor evidence="1">
        <name>[4Fe-4S] cluster</name>
        <dbReference type="ChEBI" id="CHEBI:49883"/>
    </cofactor>
    <text evidence="1">Binds 2 [4Fe-4S] clusters. One cluster is coordinated with 3 cysteines and an exchangeable S-adenosyl-L-methionine.</text>
</comment>
<comment type="subcellular location">
    <subcellularLocation>
        <location evidence="1">Cytoplasm</location>
    </subcellularLocation>
</comment>
<comment type="similarity">
    <text evidence="1">Belongs to the methylthiotransferase family. RimO subfamily.</text>
</comment>
<proteinExistence type="inferred from homology"/>
<evidence type="ECO:0000255" key="1">
    <source>
        <dbReference type="HAMAP-Rule" id="MF_01865"/>
    </source>
</evidence>
<evidence type="ECO:0000255" key="2">
    <source>
        <dbReference type="PROSITE-ProRule" id="PRU01266"/>
    </source>
</evidence>